<evidence type="ECO:0000255" key="1">
    <source>
        <dbReference type="HAMAP-Rule" id="MF_00318"/>
    </source>
</evidence>
<protein>
    <recommendedName>
        <fullName evidence="1">Enolase</fullName>
        <ecNumber evidence="1">4.2.1.11</ecNumber>
    </recommendedName>
    <alternativeName>
        <fullName evidence="1">2-phospho-D-glycerate hydro-lyase</fullName>
    </alternativeName>
    <alternativeName>
        <fullName evidence="1">2-phosphoglycerate dehydratase</fullName>
    </alternativeName>
</protein>
<gene>
    <name evidence="1" type="primary">eno</name>
    <name type="ordered locus">TDE_0949</name>
</gene>
<comment type="function">
    <text evidence="1">Catalyzes the reversible conversion of 2-phosphoglycerate (2-PG) into phosphoenolpyruvate (PEP). It is essential for the degradation of carbohydrates via glycolysis.</text>
</comment>
<comment type="catalytic activity">
    <reaction evidence="1">
        <text>(2R)-2-phosphoglycerate = phosphoenolpyruvate + H2O</text>
        <dbReference type="Rhea" id="RHEA:10164"/>
        <dbReference type="ChEBI" id="CHEBI:15377"/>
        <dbReference type="ChEBI" id="CHEBI:58289"/>
        <dbReference type="ChEBI" id="CHEBI:58702"/>
        <dbReference type="EC" id="4.2.1.11"/>
    </reaction>
</comment>
<comment type="cofactor">
    <cofactor evidence="1">
        <name>Mg(2+)</name>
        <dbReference type="ChEBI" id="CHEBI:18420"/>
    </cofactor>
    <text evidence="1">Binds a second Mg(2+) ion via substrate during catalysis.</text>
</comment>
<comment type="pathway">
    <text evidence="1">Carbohydrate degradation; glycolysis; pyruvate from D-glyceraldehyde 3-phosphate: step 4/5.</text>
</comment>
<comment type="subcellular location">
    <subcellularLocation>
        <location evidence="1">Cytoplasm</location>
    </subcellularLocation>
    <subcellularLocation>
        <location evidence="1">Secreted</location>
    </subcellularLocation>
    <subcellularLocation>
        <location evidence="1">Cell surface</location>
    </subcellularLocation>
    <text evidence="1">Fractions of enolase are present in both the cytoplasm and on the cell surface.</text>
</comment>
<comment type="similarity">
    <text evidence="1">Belongs to the enolase family.</text>
</comment>
<organism>
    <name type="scientific">Treponema denticola (strain ATCC 35405 / DSM 14222 / CIP 103919 / JCM 8153 / KCTC 15104)</name>
    <dbReference type="NCBI Taxonomy" id="243275"/>
    <lineage>
        <taxon>Bacteria</taxon>
        <taxon>Pseudomonadati</taxon>
        <taxon>Spirochaetota</taxon>
        <taxon>Spirochaetia</taxon>
        <taxon>Spirochaetales</taxon>
        <taxon>Treponemataceae</taxon>
        <taxon>Treponema</taxon>
    </lineage>
</organism>
<sequence length="433" mass="47386">MSDIIYIEGREILDSRGNPTVEVEVQLSDFSYGRACVPSGASTGEYEALEMRDGDKSRYMGKGVLKAVDQVNTVIAEELDGADALDQAEIDNMLINLDGTENKSKLGANAMLGVSMAVARAAADSLGLPLYRYLGGVHAMQMPVPMANIINGGRHSDNKIDFQEYMIMPVGAPSIREGIRMTAEVFHALKDILKKEGHVTAVGDEGGFAPNIENVQALDYIMKAIEKAGYKPGKDVVIALDCASSELFDAGDRKGYKFWKSEPSKILNADEMVDLFKDWISKYPIVSIEDPLDQNDWEGYAKMTKELGNQIQIVGDDFFVTNTKRLARGIEEGACNSILIKLNQIGTVTETIDAVRMAQKAGYTAVISHRSGETEDAFIADLAVALETGQIKTGSMSRSDRIAKYNQLMRIEDELGYNARYAGMATFANLIKK</sequence>
<proteinExistence type="inferred from homology"/>
<feature type="chain" id="PRO_0000133998" description="Enolase">
    <location>
        <begin position="1"/>
        <end position="433"/>
    </location>
</feature>
<feature type="active site" description="Proton donor" evidence="1">
    <location>
        <position position="205"/>
    </location>
</feature>
<feature type="active site" description="Proton acceptor" evidence="1">
    <location>
        <position position="341"/>
    </location>
</feature>
<feature type="binding site" evidence="1">
    <location>
        <position position="163"/>
    </location>
    <ligand>
        <name>(2R)-2-phosphoglycerate</name>
        <dbReference type="ChEBI" id="CHEBI:58289"/>
    </ligand>
</feature>
<feature type="binding site" evidence="1">
    <location>
        <position position="241"/>
    </location>
    <ligand>
        <name>Mg(2+)</name>
        <dbReference type="ChEBI" id="CHEBI:18420"/>
    </ligand>
</feature>
<feature type="binding site" evidence="1">
    <location>
        <position position="289"/>
    </location>
    <ligand>
        <name>Mg(2+)</name>
        <dbReference type="ChEBI" id="CHEBI:18420"/>
    </ligand>
</feature>
<feature type="binding site" evidence="1">
    <location>
        <position position="316"/>
    </location>
    <ligand>
        <name>Mg(2+)</name>
        <dbReference type="ChEBI" id="CHEBI:18420"/>
    </ligand>
</feature>
<feature type="binding site" evidence="1">
    <location>
        <position position="341"/>
    </location>
    <ligand>
        <name>(2R)-2-phosphoglycerate</name>
        <dbReference type="ChEBI" id="CHEBI:58289"/>
    </ligand>
</feature>
<feature type="binding site" evidence="1">
    <location>
        <position position="370"/>
    </location>
    <ligand>
        <name>(2R)-2-phosphoglycerate</name>
        <dbReference type="ChEBI" id="CHEBI:58289"/>
    </ligand>
</feature>
<feature type="binding site" evidence="1">
    <location>
        <position position="371"/>
    </location>
    <ligand>
        <name>(2R)-2-phosphoglycerate</name>
        <dbReference type="ChEBI" id="CHEBI:58289"/>
    </ligand>
</feature>
<feature type="binding site" evidence="1">
    <location>
        <position position="392"/>
    </location>
    <ligand>
        <name>(2R)-2-phosphoglycerate</name>
        <dbReference type="ChEBI" id="CHEBI:58289"/>
    </ligand>
</feature>
<reference key="1">
    <citation type="journal article" date="2004" name="Proc. Natl. Acad. Sci. U.S.A.">
        <title>Comparison of the genome of the oral pathogen Treponema denticola with other spirochete genomes.</title>
        <authorList>
            <person name="Seshadri R."/>
            <person name="Myers G.S.A."/>
            <person name="Tettelin H."/>
            <person name="Eisen J.A."/>
            <person name="Heidelberg J.F."/>
            <person name="Dodson R.J."/>
            <person name="Davidsen T.M."/>
            <person name="DeBoy R.T."/>
            <person name="Fouts D.E."/>
            <person name="Haft D.H."/>
            <person name="Selengut J."/>
            <person name="Ren Q."/>
            <person name="Brinkac L.M."/>
            <person name="Madupu R."/>
            <person name="Kolonay J.F."/>
            <person name="Durkin S.A."/>
            <person name="Daugherty S.C."/>
            <person name="Shetty J."/>
            <person name="Shvartsbeyn A."/>
            <person name="Gebregeorgis E."/>
            <person name="Geer K."/>
            <person name="Tsegaye G."/>
            <person name="Malek J.A."/>
            <person name="Ayodeji B."/>
            <person name="Shatsman S."/>
            <person name="McLeod M.P."/>
            <person name="Smajs D."/>
            <person name="Howell J.K."/>
            <person name="Pal S."/>
            <person name="Amin A."/>
            <person name="Vashisth P."/>
            <person name="McNeill T.Z."/>
            <person name="Xiang Q."/>
            <person name="Sodergren E."/>
            <person name="Baca E."/>
            <person name="Weinstock G.M."/>
            <person name="Norris S.J."/>
            <person name="Fraser C.M."/>
            <person name="Paulsen I.T."/>
        </authorList>
    </citation>
    <scope>NUCLEOTIDE SEQUENCE [LARGE SCALE GENOMIC DNA]</scope>
    <source>
        <strain>ATCC 35405 / DSM 14222 / CIP 103919 / JCM 8153 / KCTC 15104</strain>
    </source>
</reference>
<dbReference type="EC" id="4.2.1.11" evidence="1"/>
<dbReference type="EMBL" id="AE017226">
    <property type="protein sequence ID" value="AAS11440.1"/>
    <property type="molecule type" value="Genomic_DNA"/>
</dbReference>
<dbReference type="RefSeq" id="NP_971559.1">
    <property type="nucleotide sequence ID" value="NC_002967.9"/>
</dbReference>
<dbReference type="RefSeq" id="WP_002682247.1">
    <property type="nucleotide sequence ID" value="NC_002967.9"/>
</dbReference>
<dbReference type="SMR" id="Q73P50"/>
<dbReference type="STRING" id="243275.TDE_0949"/>
<dbReference type="PaxDb" id="243275-TDE_0949"/>
<dbReference type="GeneID" id="2740982"/>
<dbReference type="KEGG" id="tde:TDE_0949"/>
<dbReference type="PATRIC" id="fig|243275.7.peg.913"/>
<dbReference type="eggNOG" id="COG0148">
    <property type="taxonomic scope" value="Bacteria"/>
</dbReference>
<dbReference type="HOGENOM" id="CLU_031223_2_1_12"/>
<dbReference type="OrthoDB" id="9804716at2"/>
<dbReference type="UniPathway" id="UPA00109">
    <property type="reaction ID" value="UER00187"/>
</dbReference>
<dbReference type="Proteomes" id="UP000008212">
    <property type="component" value="Chromosome"/>
</dbReference>
<dbReference type="GO" id="GO:0009986">
    <property type="term" value="C:cell surface"/>
    <property type="evidence" value="ECO:0007669"/>
    <property type="project" value="UniProtKB-SubCell"/>
</dbReference>
<dbReference type="GO" id="GO:0005576">
    <property type="term" value="C:extracellular region"/>
    <property type="evidence" value="ECO:0007669"/>
    <property type="project" value="UniProtKB-SubCell"/>
</dbReference>
<dbReference type="GO" id="GO:0000015">
    <property type="term" value="C:phosphopyruvate hydratase complex"/>
    <property type="evidence" value="ECO:0007669"/>
    <property type="project" value="InterPro"/>
</dbReference>
<dbReference type="GO" id="GO:0000287">
    <property type="term" value="F:magnesium ion binding"/>
    <property type="evidence" value="ECO:0007669"/>
    <property type="project" value="UniProtKB-UniRule"/>
</dbReference>
<dbReference type="GO" id="GO:0004634">
    <property type="term" value="F:phosphopyruvate hydratase activity"/>
    <property type="evidence" value="ECO:0007669"/>
    <property type="project" value="UniProtKB-UniRule"/>
</dbReference>
<dbReference type="GO" id="GO:0006096">
    <property type="term" value="P:glycolytic process"/>
    <property type="evidence" value="ECO:0007669"/>
    <property type="project" value="UniProtKB-UniRule"/>
</dbReference>
<dbReference type="CDD" id="cd03313">
    <property type="entry name" value="enolase"/>
    <property type="match status" value="1"/>
</dbReference>
<dbReference type="FunFam" id="3.20.20.120:FF:000001">
    <property type="entry name" value="Enolase"/>
    <property type="match status" value="1"/>
</dbReference>
<dbReference type="FunFam" id="3.30.390.10:FF:000001">
    <property type="entry name" value="Enolase"/>
    <property type="match status" value="1"/>
</dbReference>
<dbReference type="Gene3D" id="3.20.20.120">
    <property type="entry name" value="Enolase-like C-terminal domain"/>
    <property type="match status" value="1"/>
</dbReference>
<dbReference type="Gene3D" id="3.30.390.10">
    <property type="entry name" value="Enolase-like, N-terminal domain"/>
    <property type="match status" value="1"/>
</dbReference>
<dbReference type="HAMAP" id="MF_00318">
    <property type="entry name" value="Enolase"/>
    <property type="match status" value="1"/>
</dbReference>
<dbReference type="InterPro" id="IPR000941">
    <property type="entry name" value="Enolase"/>
</dbReference>
<dbReference type="InterPro" id="IPR036849">
    <property type="entry name" value="Enolase-like_C_sf"/>
</dbReference>
<dbReference type="InterPro" id="IPR029017">
    <property type="entry name" value="Enolase-like_N"/>
</dbReference>
<dbReference type="InterPro" id="IPR020810">
    <property type="entry name" value="Enolase_C"/>
</dbReference>
<dbReference type="InterPro" id="IPR020809">
    <property type="entry name" value="Enolase_CS"/>
</dbReference>
<dbReference type="InterPro" id="IPR020811">
    <property type="entry name" value="Enolase_N"/>
</dbReference>
<dbReference type="NCBIfam" id="TIGR01060">
    <property type="entry name" value="eno"/>
    <property type="match status" value="1"/>
</dbReference>
<dbReference type="PANTHER" id="PTHR11902">
    <property type="entry name" value="ENOLASE"/>
    <property type="match status" value="1"/>
</dbReference>
<dbReference type="PANTHER" id="PTHR11902:SF1">
    <property type="entry name" value="ENOLASE"/>
    <property type="match status" value="1"/>
</dbReference>
<dbReference type="Pfam" id="PF00113">
    <property type="entry name" value="Enolase_C"/>
    <property type="match status" value="1"/>
</dbReference>
<dbReference type="Pfam" id="PF03952">
    <property type="entry name" value="Enolase_N"/>
    <property type="match status" value="1"/>
</dbReference>
<dbReference type="PIRSF" id="PIRSF001400">
    <property type="entry name" value="Enolase"/>
    <property type="match status" value="1"/>
</dbReference>
<dbReference type="PRINTS" id="PR00148">
    <property type="entry name" value="ENOLASE"/>
</dbReference>
<dbReference type="SFLD" id="SFLDF00002">
    <property type="entry name" value="enolase"/>
    <property type="match status" value="1"/>
</dbReference>
<dbReference type="SFLD" id="SFLDG00178">
    <property type="entry name" value="enolase"/>
    <property type="match status" value="1"/>
</dbReference>
<dbReference type="SMART" id="SM01192">
    <property type="entry name" value="Enolase_C"/>
    <property type="match status" value="1"/>
</dbReference>
<dbReference type="SMART" id="SM01193">
    <property type="entry name" value="Enolase_N"/>
    <property type="match status" value="1"/>
</dbReference>
<dbReference type="SUPFAM" id="SSF51604">
    <property type="entry name" value="Enolase C-terminal domain-like"/>
    <property type="match status" value="1"/>
</dbReference>
<dbReference type="SUPFAM" id="SSF54826">
    <property type="entry name" value="Enolase N-terminal domain-like"/>
    <property type="match status" value="1"/>
</dbReference>
<dbReference type="PROSITE" id="PS00164">
    <property type="entry name" value="ENOLASE"/>
    <property type="match status" value="1"/>
</dbReference>
<accession>Q73P50</accession>
<keyword id="KW-0963">Cytoplasm</keyword>
<keyword id="KW-0324">Glycolysis</keyword>
<keyword id="KW-0456">Lyase</keyword>
<keyword id="KW-0460">Magnesium</keyword>
<keyword id="KW-0479">Metal-binding</keyword>
<keyword id="KW-1185">Reference proteome</keyword>
<keyword id="KW-0964">Secreted</keyword>
<name>ENO_TREDE</name>